<reference key="1">
    <citation type="submission" date="2007-11" db="EMBL/GenBank/DDBJ databases">
        <title>Complete sequence of chromosome of Shewanella baltica OS195.</title>
        <authorList>
            <consortium name="US DOE Joint Genome Institute"/>
            <person name="Copeland A."/>
            <person name="Lucas S."/>
            <person name="Lapidus A."/>
            <person name="Barry K."/>
            <person name="Glavina del Rio T."/>
            <person name="Dalin E."/>
            <person name="Tice H."/>
            <person name="Pitluck S."/>
            <person name="Chain P."/>
            <person name="Malfatti S."/>
            <person name="Shin M."/>
            <person name="Vergez L."/>
            <person name="Schmutz J."/>
            <person name="Larimer F."/>
            <person name="Land M."/>
            <person name="Hauser L."/>
            <person name="Kyrpides N."/>
            <person name="Kim E."/>
            <person name="Brettar I."/>
            <person name="Rodrigues J."/>
            <person name="Konstantinidis K."/>
            <person name="Klappenbach J."/>
            <person name="Hofle M."/>
            <person name="Tiedje J."/>
            <person name="Richardson P."/>
        </authorList>
    </citation>
    <scope>NUCLEOTIDE SEQUENCE [LARGE SCALE GENOMIC DNA]</scope>
    <source>
        <strain>OS195</strain>
    </source>
</reference>
<organism>
    <name type="scientific">Shewanella baltica (strain OS195)</name>
    <dbReference type="NCBI Taxonomy" id="399599"/>
    <lineage>
        <taxon>Bacteria</taxon>
        <taxon>Pseudomonadati</taxon>
        <taxon>Pseudomonadota</taxon>
        <taxon>Gammaproteobacteria</taxon>
        <taxon>Alteromonadales</taxon>
        <taxon>Shewanellaceae</taxon>
        <taxon>Shewanella</taxon>
    </lineage>
</organism>
<gene>
    <name evidence="1" type="primary">ispE</name>
    <name type="ordered locus">Sbal195_3740</name>
</gene>
<sequence>MPAAISRNWPAPAKLNLFLHINGRRADGYHELQTLFQFIDYCDMLDFKVTETPELILHSNMSGVVADSDNLILRAAKSLQQTTGFNGGAEIWLDKRLPMGGGLGGGSSDAATTLVALNTLWHTQLSTEELAKIGLKLGADIPVFIHGFAAFAEGVGERLQAVNPSEPWYLVIAPDAHVSTADVFQDPLLPRDTPKLAIDTLMSQPWANDCQKLVVSKYPQVAKALGWLLEYAPSRMTGTGACVFGEFTQQQQALAALAKLPSEMQGFVAQGMNLSPLITRLSHP</sequence>
<evidence type="ECO:0000255" key="1">
    <source>
        <dbReference type="HAMAP-Rule" id="MF_00061"/>
    </source>
</evidence>
<accession>A9L2D7</accession>
<dbReference type="EC" id="2.7.1.148" evidence="1"/>
<dbReference type="EMBL" id="CP000891">
    <property type="protein sequence ID" value="ABX50900.1"/>
    <property type="molecule type" value="Genomic_DNA"/>
</dbReference>
<dbReference type="RefSeq" id="WP_006084079.1">
    <property type="nucleotide sequence ID" value="NC_009997.1"/>
</dbReference>
<dbReference type="SMR" id="A9L2D7"/>
<dbReference type="GeneID" id="11773758"/>
<dbReference type="KEGG" id="sbn:Sbal195_3740"/>
<dbReference type="HOGENOM" id="CLU_053057_3_0_6"/>
<dbReference type="UniPathway" id="UPA00056">
    <property type="reaction ID" value="UER00094"/>
</dbReference>
<dbReference type="Proteomes" id="UP000000770">
    <property type="component" value="Chromosome"/>
</dbReference>
<dbReference type="GO" id="GO:0050515">
    <property type="term" value="F:4-(cytidine 5'-diphospho)-2-C-methyl-D-erythritol kinase activity"/>
    <property type="evidence" value="ECO:0007669"/>
    <property type="project" value="UniProtKB-UniRule"/>
</dbReference>
<dbReference type="GO" id="GO:0005524">
    <property type="term" value="F:ATP binding"/>
    <property type="evidence" value="ECO:0007669"/>
    <property type="project" value="UniProtKB-UniRule"/>
</dbReference>
<dbReference type="GO" id="GO:0019288">
    <property type="term" value="P:isopentenyl diphosphate biosynthetic process, methylerythritol 4-phosphate pathway"/>
    <property type="evidence" value="ECO:0007669"/>
    <property type="project" value="UniProtKB-UniRule"/>
</dbReference>
<dbReference type="GO" id="GO:0016114">
    <property type="term" value="P:terpenoid biosynthetic process"/>
    <property type="evidence" value="ECO:0007669"/>
    <property type="project" value="InterPro"/>
</dbReference>
<dbReference type="FunFam" id="3.30.230.10:FF:000022">
    <property type="entry name" value="4-diphosphocytidyl-2-C-methyl-D-erythritol kinase"/>
    <property type="match status" value="1"/>
</dbReference>
<dbReference type="Gene3D" id="3.30.230.10">
    <property type="match status" value="1"/>
</dbReference>
<dbReference type="Gene3D" id="3.30.70.890">
    <property type="entry name" value="GHMP kinase, C-terminal domain"/>
    <property type="match status" value="1"/>
</dbReference>
<dbReference type="HAMAP" id="MF_00061">
    <property type="entry name" value="IspE"/>
    <property type="match status" value="1"/>
</dbReference>
<dbReference type="InterPro" id="IPR013750">
    <property type="entry name" value="GHMP_kinase_C_dom"/>
</dbReference>
<dbReference type="InterPro" id="IPR036554">
    <property type="entry name" value="GHMP_kinase_C_sf"/>
</dbReference>
<dbReference type="InterPro" id="IPR006204">
    <property type="entry name" value="GHMP_kinase_N_dom"/>
</dbReference>
<dbReference type="InterPro" id="IPR004424">
    <property type="entry name" value="IspE"/>
</dbReference>
<dbReference type="InterPro" id="IPR020568">
    <property type="entry name" value="Ribosomal_Su5_D2-typ_SF"/>
</dbReference>
<dbReference type="InterPro" id="IPR014721">
    <property type="entry name" value="Ribsml_uS5_D2-typ_fold_subgr"/>
</dbReference>
<dbReference type="NCBIfam" id="TIGR00154">
    <property type="entry name" value="ispE"/>
    <property type="match status" value="1"/>
</dbReference>
<dbReference type="PANTHER" id="PTHR43527">
    <property type="entry name" value="4-DIPHOSPHOCYTIDYL-2-C-METHYL-D-ERYTHRITOL KINASE, CHLOROPLASTIC"/>
    <property type="match status" value="1"/>
</dbReference>
<dbReference type="PANTHER" id="PTHR43527:SF2">
    <property type="entry name" value="4-DIPHOSPHOCYTIDYL-2-C-METHYL-D-ERYTHRITOL KINASE, CHLOROPLASTIC"/>
    <property type="match status" value="1"/>
</dbReference>
<dbReference type="Pfam" id="PF08544">
    <property type="entry name" value="GHMP_kinases_C"/>
    <property type="match status" value="1"/>
</dbReference>
<dbReference type="Pfam" id="PF00288">
    <property type="entry name" value="GHMP_kinases_N"/>
    <property type="match status" value="1"/>
</dbReference>
<dbReference type="PIRSF" id="PIRSF010376">
    <property type="entry name" value="IspE"/>
    <property type="match status" value="1"/>
</dbReference>
<dbReference type="SUPFAM" id="SSF55060">
    <property type="entry name" value="GHMP Kinase, C-terminal domain"/>
    <property type="match status" value="1"/>
</dbReference>
<dbReference type="SUPFAM" id="SSF54211">
    <property type="entry name" value="Ribosomal protein S5 domain 2-like"/>
    <property type="match status" value="1"/>
</dbReference>
<name>ISPE_SHEB9</name>
<feature type="chain" id="PRO_1000075058" description="4-diphosphocytidyl-2-C-methyl-D-erythritol kinase">
    <location>
        <begin position="1"/>
        <end position="284"/>
    </location>
</feature>
<feature type="active site" evidence="1">
    <location>
        <position position="14"/>
    </location>
</feature>
<feature type="active site" evidence="1">
    <location>
        <position position="140"/>
    </location>
</feature>
<feature type="binding site" evidence="1">
    <location>
        <begin position="98"/>
        <end position="108"/>
    </location>
    <ligand>
        <name>ATP</name>
        <dbReference type="ChEBI" id="CHEBI:30616"/>
    </ligand>
</feature>
<comment type="function">
    <text evidence="1">Catalyzes the phosphorylation of the position 2 hydroxy group of 4-diphosphocytidyl-2C-methyl-D-erythritol.</text>
</comment>
<comment type="catalytic activity">
    <reaction evidence="1">
        <text>4-CDP-2-C-methyl-D-erythritol + ATP = 4-CDP-2-C-methyl-D-erythritol 2-phosphate + ADP + H(+)</text>
        <dbReference type="Rhea" id="RHEA:18437"/>
        <dbReference type="ChEBI" id="CHEBI:15378"/>
        <dbReference type="ChEBI" id="CHEBI:30616"/>
        <dbReference type="ChEBI" id="CHEBI:57823"/>
        <dbReference type="ChEBI" id="CHEBI:57919"/>
        <dbReference type="ChEBI" id="CHEBI:456216"/>
        <dbReference type="EC" id="2.7.1.148"/>
    </reaction>
</comment>
<comment type="pathway">
    <text evidence="1">Isoprenoid biosynthesis; isopentenyl diphosphate biosynthesis via DXP pathway; isopentenyl diphosphate from 1-deoxy-D-xylulose 5-phosphate: step 3/6.</text>
</comment>
<comment type="similarity">
    <text evidence="1">Belongs to the GHMP kinase family. IspE subfamily.</text>
</comment>
<keyword id="KW-0067">ATP-binding</keyword>
<keyword id="KW-0414">Isoprene biosynthesis</keyword>
<keyword id="KW-0418">Kinase</keyword>
<keyword id="KW-0547">Nucleotide-binding</keyword>
<keyword id="KW-0808">Transferase</keyword>
<protein>
    <recommendedName>
        <fullName evidence="1">4-diphosphocytidyl-2-C-methyl-D-erythritol kinase</fullName>
        <shortName evidence="1">CMK</shortName>
        <ecNumber evidence="1">2.7.1.148</ecNumber>
    </recommendedName>
    <alternativeName>
        <fullName evidence="1">4-(cytidine-5'-diphospho)-2-C-methyl-D-erythritol kinase</fullName>
    </alternativeName>
</protein>
<proteinExistence type="inferred from homology"/>